<sequence length="247" mass="27202">MLKATISADIFKDTVDALSALVTECRLHFSETEVWARAVDTANVAMIILTLKKEAFSQFEATTGEIGLDIAKLKNTYSMMGKASDIRLEHQEGANKIEVTFEGYHYSITLLDSNTIKKDPNAPGIQLPGQVTISGSELYNVIKSASIVSDKIWFAIEPEKKEFVLYAEGDSDNIRRAFSAGEVIASNWEPAKSLFSIDYLKDMGKVMSHAEKVTIDLGVDHPVKFSFEIAGGNGQVEYLLAPRIEAD</sequence>
<keyword id="KW-0235">DNA replication</keyword>
<keyword id="KW-0238">DNA-binding</keyword>
<keyword id="KW-1185">Reference proteome</keyword>
<proteinExistence type="inferred from homology"/>
<reference key="1">
    <citation type="journal article" date="2016" name="Stand. Genomic Sci.">
        <title>Complete genome sequence of Methanospirillum hungatei type strain JF1.</title>
        <authorList>
            <person name="Gunsalus R.P."/>
            <person name="Cook L.E."/>
            <person name="Crable B."/>
            <person name="Rohlin L."/>
            <person name="McDonald E."/>
            <person name="Mouttaki H."/>
            <person name="Sieber J.R."/>
            <person name="Poweleit N."/>
            <person name="Zhou H."/>
            <person name="Lapidus A.L."/>
            <person name="Daligault H.E."/>
            <person name="Land M."/>
            <person name="Gilna P."/>
            <person name="Ivanova N."/>
            <person name="Kyrpides N."/>
            <person name="Culley D.E."/>
            <person name="McInerney M.J."/>
        </authorList>
    </citation>
    <scope>NUCLEOTIDE SEQUENCE [LARGE SCALE GENOMIC DNA]</scope>
    <source>
        <strain>ATCC 27890 / DSM 864 / NBRC 100397 / JF-1</strain>
    </source>
</reference>
<protein>
    <recommendedName>
        <fullName evidence="1">DNA polymerase sliding clamp</fullName>
    </recommendedName>
    <alternativeName>
        <fullName evidence="1">Proliferating cell nuclear antigen homolog</fullName>
        <shortName evidence="1">PCNA</shortName>
    </alternativeName>
</protein>
<gene>
    <name evidence="1" type="primary">pcn</name>
    <name type="ordered locus">Mhun_1488</name>
</gene>
<name>PCNA_METHJ</name>
<comment type="function">
    <text evidence="1">Sliding clamp subunit that acts as a moving platform for DNA processing. Responsible for tethering the catalytic subunit of DNA polymerase and other proteins to DNA during high-speed replication.</text>
</comment>
<comment type="subunit">
    <text evidence="1">Homotrimer. The subunits circularize to form a toroid; DNA passes through its center. Replication factor C (RFC) is required to load the toroid on the DNA.</text>
</comment>
<comment type="similarity">
    <text evidence="1">Belongs to the PCNA family.</text>
</comment>
<evidence type="ECO:0000255" key="1">
    <source>
        <dbReference type="HAMAP-Rule" id="MF_00317"/>
    </source>
</evidence>
<organism>
    <name type="scientific">Methanospirillum hungatei JF-1 (strain ATCC 27890 / DSM 864 / NBRC 100397 / JF-1)</name>
    <dbReference type="NCBI Taxonomy" id="323259"/>
    <lineage>
        <taxon>Archaea</taxon>
        <taxon>Methanobacteriati</taxon>
        <taxon>Methanobacteriota</taxon>
        <taxon>Stenosarchaea group</taxon>
        <taxon>Methanomicrobia</taxon>
        <taxon>Methanomicrobiales</taxon>
        <taxon>Methanospirillaceae</taxon>
        <taxon>Methanospirillum</taxon>
    </lineage>
</organism>
<dbReference type="EMBL" id="CP000254">
    <property type="protein sequence ID" value="ABD41222.1"/>
    <property type="molecule type" value="Genomic_DNA"/>
</dbReference>
<dbReference type="RefSeq" id="WP_011448491.1">
    <property type="nucleotide sequence ID" value="NC_007796.1"/>
</dbReference>
<dbReference type="SMR" id="Q2FNX1"/>
<dbReference type="FunCoup" id="Q2FNX1">
    <property type="interactions" value="158"/>
</dbReference>
<dbReference type="STRING" id="323259.Mhun_1488"/>
<dbReference type="EnsemblBacteria" id="ABD41222">
    <property type="protein sequence ID" value="ABD41222"/>
    <property type="gene ID" value="Mhun_1488"/>
</dbReference>
<dbReference type="GeneID" id="3922719"/>
<dbReference type="KEGG" id="mhu:Mhun_1488"/>
<dbReference type="eggNOG" id="arCOG00488">
    <property type="taxonomic scope" value="Archaea"/>
</dbReference>
<dbReference type="HOGENOM" id="CLU_043978_1_1_2"/>
<dbReference type="InParanoid" id="Q2FNX1"/>
<dbReference type="OrthoDB" id="14749at2157"/>
<dbReference type="Proteomes" id="UP000001941">
    <property type="component" value="Chromosome"/>
</dbReference>
<dbReference type="GO" id="GO:0003677">
    <property type="term" value="F:DNA binding"/>
    <property type="evidence" value="ECO:0007669"/>
    <property type="project" value="UniProtKB-UniRule"/>
</dbReference>
<dbReference type="GO" id="GO:0030337">
    <property type="term" value="F:DNA polymerase processivity factor activity"/>
    <property type="evidence" value="ECO:0007669"/>
    <property type="project" value="UniProtKB-UniRule"/>
</dbReference>
<dbReference type="GO" id="GO:0006272">
    <property type="term" value="P:leading strand elongation"/>
    <property type="evidence" value="ECO:0007669"/>
    <property type="project" value="TreeGrafter"/>
</dbReference>
<dbReference type="GO" id="GO:0006275">
    <property type="term" value="P:regulation of DNA replication"/>
    <property type="evidence" value="ECO:0007669"/>
    <property type="project" value="UniProtKB-UniRule"/>
</dbReference>
<dbReference type="CDD" id="cd00577">
    <property type="entry name" value="PCNA"/>
    <property type="match status" value="1"/>
</dbReference>
<dbReference type="Gene3D" id="3.70.10.10">
    <property type="match status" value="1"/>
</dbReference>
<dbReference type="HAMAP" id="MF_00317">
    <property type="entry name" value="DNApol_clamp_arch"/>
    <property type="match status" value="1"/>
</dbReference>
<dbReference type="InterPro" id="IPR046938">
    <property type="entry name" value="DNA_clamp_sf"/>
</dbReference>
<dbReference type="InterPro" id="IPR000730">
    <property type="entry name" value="Pr_cel_nuc_antig"/>
</dbReference>
<dbReference type="InterPro" id="IPR022649">
    <property type="entry name" value="Pr_cel_nuc_antig_C"/>
</dbReference>
<dbReference type="InterPro" id="IPR022648">
    <property type="entry name" value="Pr_cel_nuc_antig_N"/>
</dbReference>
<dbReference type="NCBIfam" id="NF002222">
    <property type="entry name" value="PRK01115.1-5"/>
    <property type="match status" value="1"/>
</dbReference>
<dbReference type="PANTHER" id="PTHR11352">
    <property type="entry name" value="PROLIFERATING CELL NUCLEAR ANTIGEN"/>
    <property type="match status" value="1"/>
</dbReference>
<dbReference type="PANTHER" id="PTHR11352:SF0">
    <property type="entry name" value="PROLIFERATING CELL NUCLEAR ANTIGEN"/>
    <property type="match status" value="1"/>
</dbReference>
<dbReference type="Pfam" id="PF02747">
    <property type="entry name" value="PCNA_C"/>
    <property type="match status" value="1"/>
</dbReference>
<dbReference type="Pfam" id="PF00705">
    <property type="entry name" value="PCNA_N"/>
    <property type="match status" value="1"/>
</dbReference>
<dbReference type="PRINTS" id="PR00339">
    <property type="entry name" value="PCNACYCLIN"/>
</dbReference>
<dbReference type="SUPFAM" id="SSF55979">
    <property type="entry name" value="DNA clamp"/>
    <property type="match status" value="1"/>
</dbReference>
<accession>Q2FNX1</accession>
<feature type="chain" id="PRO_1000132968" description="DNA polymerase sliding clamp">
    <location>
        <begin position="1"/>
        <end position="247"/>
    </location>
</feature>